<name>CEMA_OENPA</name>
<sequence>MVFFPWWISLLFNKGLESWVTNWWNTTHSETFLTDMQEKSILDKFIELEELLLLDEMINEYPETHLQTLRIGIHKEMVRLIKMRNEDHIHTILHLSTNIICFIIFRGYSILGNKELLILNSWMQEFLYNLSDTIKAFSILLLTDFCIGFHSPHGWELMIAYVYKDFGFAQNDQIISGLVSTFPVILDTIFKYWIFRYLNRVSPSLVVIYDSMND</sequence>
<feature type="chain" id="PRO_0000346547" description="Potassium/proton antiporter CemA">
    <location>
        <begin position="1"/>
        <end position="214"/>
    </location>
</feature>
<feature type="transmembrane region" description="Helical" evidence="1">
    <location>
        <begin position="92"/>
        <end position="112"/>
    </location>
</feature>
<feature type="transmembrane region" description="Helical" evidence="1">
    <location>
        <begin position="174"/>
        <end position="194"/>
    </location>
</feature>
<proteinExistence type="evidence at protein level"/>
<protein>
    <recommendedName>
        <fullName evidence="1">Potassium/proton antiporter CemA</fullName>
    </recommendedName>
    <alternativeName>
        <fullName evidence="1">Chloroplast envelope membrane protein A</fullName>
        <shortName evidence="1">CemA</shortName>
    </alternativeName>
</protein>
<accession>B0Z5E0</accession>
<gene>
    <name evidence="1" type="primary">cemA</name>
</gene>
<geneLocation type="chloroplast"/>
<organism>
    <name type="scientific">Oenothera parviflora</name>
    <name type="common">Small-flowered evening primrose</name>
    <name type="synonym">Oenothera cruciata</name>
    <dbReference type="NCBI Taxonomy" id="482429"/>
    <lineage>
        <taxon>Eukaryota</taxon>
        <taxon>Viridiplantae</taxon>
        <taxon>Streptophyta</taxon>
        <taxon>Embryophyta</taxon>
        <taxon>Tracheophyta</taxon>
        <taxon>Spermatophyta</taxon>
        <taxon>Magnoliopsida</taxon>
        <taxon>eudicotyledons</taxon>
        <taxon>Gunneridae</taxon>
        <taxon>Pentapetalae</taxon>
        <taxon>rosids</taxon>
        <taxon>malvids</taxon>
        <taxon>Myrtales</taxon>
        <taxon>Onagraceae</taxon>
        <taxon>Onagroideae</taxon>
        <taxon>Onagreae</taxon>
        <taxon>Oenothera</taxon>
    </lineage>
</organism>
<keyword id="KW-0050">Antiport</keyword>
<keyword id="KW-0150">Chloroplast</keyword>
<keyword id="KW-0375">Hydrogen ion transport</keyword>
<keyword id="KW-0406">Ion transport</keyword>
<keyword id="KW-0472">Membrane</keyword>
<keyword id="KW-0934">Plastid</keyword>
<keyword id="KW-1001">Plastid inner membrane</keyword>
<keyword id="KW-0630">Potassium</keyword>
<keyword id="KW-0633">Potassium transport</keyword>
<keyword id="KW-0812">Transmembrane</keyword>
<keyword id="KW-1133">Transmembrane helix</keyword>
<keyword id="KW-0813">Transport</keyword>
<comment type="function">
    <text evidence="1">Contributes to K(+)/H(+) antiport activity by supporting proton efflux to control proton extrusion and homeostasis in chloroplasts in a light-dependent manner to modulate photosynthesis. Prevents excessive induction of non-photochemical quenching (NPQ) under continuous-light conditions. Indirectly promotes efficient inorganic carbon uptake into chloroplasts.</text>
</comment>
<comment type="catalytic activity">
    <reaction evidence="1">
        <text>K(+)(in) + H(+)(out) = K(+)(out) + H(+)(in)</text>
        <dbReference type="Rhea" id="RHEA:29467"/>
        <dbReference type="ChEBI" id="CHEBI:15378"/>
        <dbReference type="ChEBI" id="CHEBI:29103"/>
    </reaction>
</comment>
<comment type="subcellular location">
    <subcellularLocation>
        <location evidence="1">Plastid</location>
        <location evidence="1">Chloroplast inner membrane</location>
        <topology evidence="1">Multi-pass membrane protein</topology>
    </subcellularLocation>
</comment>
<comment type="similarity">
    <text evidence="1 2">Belongs to the CemA family.</text>
</comment>
<reference key="1">
    <citation type="journal article" date="2008" name="Nucleic Acids Res.">
        <title>The complete nucleotide sequences of the five genetically distinct plastid genomes of Oenothera, subsection Oenothera: I. Sequence evaluation and plastome evolution.</title>
        <authorList>
            <person name="Greiner S."/>
            <person name="Wang X."/>
            <person name="Rauwolf U."/>
            <person name="Silber M.V."/>
            <person name="Mayer K."/>
            <person name="Meurer J."/>
            <person name="Haberer G."/>
            <person name="Herrmann R.G."/>
        </authorList>
    </citation>
    <scope>NUCLEOTIDE SEQUENCE [LARGE SCALE GENOMIC DNA]</scope>
    <scope>IDENTIFICATION BY IMMUNOBLOTTING</scope>
    <source>
        <strain>cv. Atrovirens</strain>
    </source>
</reference>
<evidence type="ECO:0000255" key="1">
    <source>
        <dbReference type="HAMAP-Rule" id="MF_01308"/>
    </source>
</evidence>
<evidence type="ECO:0000305" key="2"/>
<dbReference type="EMBL" id="EU262891">
    <property type="protein sequence ID" value="ABX10133.1"/>
    <property type="molecule type" value="Genomic_DNA"/>
</dbReference>
<dbReference type="RefSeq" id="YP_001687463.1">
    <property type="nucleotide sequence ID" value="NC_010362.1"/>
</dbReference>
<dbReference type="SMR" id="B0Z5E0"/>
<dbReference type="GeneID" id="5955437"/>
<dbReference type="GO" id="GO:0009706">
    <property type="term" value="C:chloroplast inner membrane"/>
    <property type="evidence" value="ECO:0007669"/>
    <property type="project" value="UniProtKB-SubCell"/>
</dbReference>
<dbReference type="GO" id="GO:0015297">
    <property type="term" value="F:antiporter activity"/>
    <property type="evidence" value="ECO:0007669"/>
    <property type="project" value="UniProtKB-KW"/>
</dbReference>
<dbReference type="GO" id="GO:0015078">
    <property type="term" value="F:proton transmembrane transporter activity"/>
    <property type="evidence" value="ECO:0007669"/>
    <property type="project" value="UniProtKB-UniRule"/>
</dbReference>
<dbReference type="GO" id="GO:0006813">
    <property type="term" value="P:potassium ion transport"/>
    <property type="evidence" value="ECO:0007669"/>
    <property type="project" value="UniProtKB-UniRule"/>
</dbReference>
<dbReference type="HAMAP" id="MF_01308">
    <property type="entry name" value="CemA_PxcA"/>
    <property type="match status" value="1"/>
</dbReference>
<dbReference type="InterPro" id="IPR004282">
    <property type="entry name" value="CemA"/>
</dbReference>
<dbReference type="PANTHER" id="PTHR33650:SF2">
    <property type="entry name" value="CHLOROPLAST ENVELOPE MEMBRANE PROTEIN"/>
    <property type="match status" value="1"/>
</dbReference>
<dbReference type="PANTHER" id="PTHR33650">
    <property type="entry name" value="CHLOROPLAST ENVELOPE MEMBRANE PROTEIN-RELATED"/>
    <property type="match status" value="1"/>
</dbReference>
<dbReference type="Pfam" id="PF03040">
    <property type="entry name" value="CemA"/>
    <property type="match status" value="1"/>
</dbReference>